<reference key="1">
    <citation type="journal article" date="2001" name="Proc. Natl. Acad. Sci. U.S.A.">
        <title>Complete genome sequence of Caulobacter crescentus.</title>
        <authorList>
            <person name="Nierman W.C."/>
            <person name="Feldblyum T.V."/>
            <person name="Laub M.T."/>
            <person name="Paulsen I.T."/>
            <person name="Nelson K.E."/>
            <person name="Eisen J.A."/>
            <person name="Heidelberg J.F."/>
            <person name="Alley M.R.K."/>
            <person name="Ohta N."/>
            <person name="Maddock J.R."/>
            <person name="Potocka I."/>
            <person name="Nelson W.C."/>
            <person name="Newton A."/>
            <person name="Stephens C."/>
            <person name="Phadke N.D."/>
            <person name="Ely B."/>
            <person name="DeBoy R.T."/>
            <person name="Dodson R.J."/>
            <person name="Durkin A.S."/>
            <person name="Gwinn M.L."/>
            <person name="Haft D.H."/>
            <person name="Kolonay J.F."/>
            <person name="Smit J."/>
            <person name="Craven M.B."/>
            <person name="Khouri H.M."/>
            <person name="Shetty J."/>
            <person name="Berry K.J."/>
            <person name="Utterback T.R."/>
            <person name="Tran K."/>
            <person name="Wolf A.M."/>
            <person name="Vamathevan J.J."/>
            <person name="Ermolaeva M.D."/>
            <person name="White O."/>
            <person name="Salzberg S.L."/>
            <person name="Venter J.C."/>
            <person name="Shapiro L."/>
            <person name="Fraser C.M."/>
        </authorList>
    </citation>
    <scope>NUCLEOTIDE SEQUENCE [LARGE SCALE GENOMIC DNA]</scope>
    <source>
        <strain>ATCC 19089 / CIP 103742 / CB 15</strain>
    </source>
</reference>
<reference key="2">
    <citation type="journal article" date="2005" name="Nucleic Acids Res.">
        <title>Toxin-antitoxin loci are highly abundant in free-living but lost from host-associated prokaryotes.</title>
        <authorList>
            <person name="Pandey D.P."/>
            <person name="Gerdes K."/>
        </authorList>
    </citation>
    <scope>POSSIBLE FUNCTION</scope>
    <source>
        <strain>ATCC 19089 / CIP 103742 / CB 15</strain>
    </source>
</reference>
<reference key="3">
    <citation type="journal article" date="2010" name="Mol. Microbiol.">
        <title>Interaction specificity, toxicity and regulation of a paralogous set of ParE/RelE-family toxin-antitoxin systems.</title>
        <authorList>
            <person name="Fiebig A."/>
            <person name="Castro Rojas C.M."/>
            <person name="Siegal-Gaskins D."/>
            <person name="Crosson S."/>
        </authorList>
    </citation>
    <scope>FUNCTION AS A TOXIN</scope>
    <scope>MUTAGENESIS OF 87-GLN--ASN-96 AND 93-ALA--ASN-96</scope>
    <scope>DISRUPTION PHENOTYPE</scope>
    <source>
        <strain>ATCC 19089 / CIP 103742 / CB 15</strain>
    </source>
</reference>
<reference key="4">
    <citation type="journal article" date="2010" name="Biochemistry">
        <title>A conserved mode of protein recognition and binding in a ParD-ParE toxin-antitoxin complex.</title>
        <authorList>
            <person name="Dalton K.M."/>
            <person name="Crosson S."/>
        </authorList>
    </citation>
    <scope>X-RAY CRYSTALLOGRAPHY (2.60 ANGSTROMS)</scope>
    <scope>SUBUNIT</scope>
    <source>
        <strain>ATCC 19089 / CIP 103742 / CB 15</strain>
    </source>
</reference>
<organism>
    <name type="scientific">Caulobacter vibrioides (strain ATCC 19089 / CIP 103742 / CB 15)</name>
    <name type="common">Caulobacter crescentus</name>
    <dbReference type="NCBI Taxonomy" id="190650"/>
    <lineage>
        <taxon>Bacteria</taxon>
        <taxon>Pseudomonadati</taxon>
        <taxon>Pseudomonadota</taxon>
        <taxon>Alphaproteobacteria</taxon>
        <taxon>Caulobacterales</taxon>
        <taxon>Caulobacteraceae</taxon>
        <taxon>Caulobacter</taxon>
    </lineage>
</organism>
<sequence>MKPYRLSRRAKADLDDIWTYSEQRWGVEQAADYARELQATIEMIAEHPGMGQPDENLRAGYRRCASGSHVVFYRVGVRVEIIRVLHQSMNARAHLG</sequence>
<comment type="function">
    <text evidence="2">Toxic component of a type II toxin-antitoxin (TA) system. Its toxic effect is neutralized by coexpression with cognate antitoxin ParD1 but no other ParD or RelB antitoxin. Low levels of wild-type toxin in the absence of antitoxin decreases the rate of cell growth, and results in death or loss of colony formation abilities and greatly elongated cells. Low levels of a mutant missing the last 4 residues leads to loss of cell division while cell elongation continues.</text>
</comment>
<comment type="subunit">
    <text evidence="1">Forms a ParD1(2)-ParE1(2) heterotetramer.</text>
</comment>
<comment type="disruption phenotype">
    <text evidence="2">No visible phenotype when deleted singly or as the parDE1 operon.</text>
</comment>
<comment type="similarity">
    <text evidence="3">Belongs to the RelE toxin family.</text>
</comment>
<dbReference type="EMBL" id="AE005673">
    <property type="protein sequence ID" value="AAK22858.1"/>
    <property type="molecule type" value="Genomic_DNA"/>
</dbReference>
<dbReference type="PIR" id="F87357">
    <property type="entry name" value="F87357"/>
</dbReference>
<dbReference type="RefSeq" id="NP_419690.1">
    <property type="nucleotide sequence ID" value="NC_002696.2"/>
</dbReference>
<dbReference type="RefSeq" id="WP_010918758.1">
    <property type="nucleotide sequence ID" value="NC_002696.2"/>
</dbReference>
<dbReference type="PDB" id="3KXE">
    <property type="method" value="X-ray"/>
    <property type="resolution" value="2.60 A"/>
    <property type="chains" value="A/B=1-96"/>
</dbReference>
<dbReference type="PDBsum" id="3KXE"/>
<dbReference type="SMR" id="Q9A9T8"/>
<dbReference type="STRING" id="190650.CC_0873"/>
<dbReference type="DNASU" id="941174"/>
<dbReference type="EnsemblBacteria" id="AAK22858">
    <property type="protein sequence ID" value="AAK22858"/>
    <property type="gene ID" value="CC_0873"/>
</dbReference>
<dbReference type="KEGG" id="ccr:CC_0873"/>
<dbReference type="PATRIC" id="fig|190650.5.peg.886"/>
<dbReference type="eggNOG" id="COG3668">
    <property type="taxonomic scope" value="Bacteria"/>
</dbReference>
<dbReference type="HOGENOM" id="CLU_147162_3_0_5"/>
<dbReference type="BioCyc" id="CAULO:CC0873-MONOMER"/>
<dbReference type="EvolutionaryTrace" id="Q9A9T8"/>
<dbReference type="Proteomes" id="UP000001816">
    <property type="component" value="Chromosome"/>
</dbReference>
<dbReference type="GO" id="GO:0051290">
    <property type="term" value="P:protein heterotetramerization"/>
    <property type="evidence" value="ECO:0000314"/>
    <property type="project" value="UniProtKB"/>
</dbReference>
<dbReference type="Gene3D" id="3.30.2310.20">
    <property type="entry name" value="RelE-like"/>
    <property type="match status" value="1"/>
</dbReference>
<dbReference type="InterPro" id="IPR028344">
    <property type="entry name" value="ParE1/4"/>
</dbReference>
<dbReference type="InterPro" id="IPR007712">
    <property type="entry name" value="RelE/ParE_toxin"/>
</dbReference>
<dbReference type="InterPro" id="IPR035093">
    <property type="entry name" value="RelE/ParE_toxin_dom_sf"/>
</dbReference>
<dbReference type="InterPro" id="IPR051803">
    <property type="entry name" value="TA_system_RelE-like_toxin"/>
</dbReference>
<dbReference type="PANTHER" id="PTHR33755:SF9">
    <property type="entry name" value="TOXIN PARE1"/>
    <property type="match status" value="1"/>
</dbReference>
<dbReference type="PANTHER" id="PTHR33755">
    <property type="entry name" value="TOXIN PARE1-RELATED"/>
    <property type="match status" value="1"/>
</dbReference>
<dbReference type="Pfam" id="PF05016">
    <property type="entry name" value="ParE_toxin"/>
    <property type="match status" value="1"/>
</dbReference>
<dbReference type="PIRSF" id="PIRSF029218">
    <property type="entry name" value="ParE"/>
    <property type="match status" value="1"/>
</dbReference>
<protein>
    <recommendedName>
        <fullName>Toxin ParE1</fullName>
    </recommendedName>
</protein>
<feature type="chain" id="PRO_0000408368" description="Toxin ParE1">
    <location>
        <begin position="1"/>
        <end position="96"/>
    </location>
</feature>
<feature type="mutagenesis site" description="No longer toxic; protein is significantly less stable." evidence="2">
    <location>
        <begin position="87"/>
        <end position="96"/>
    </location>
</feature>
<feature type="mutagenesis site" description="Decreased toxicity; protein is less stable." evidence="2">
    <location>
        <begin position="93"/>
        <end position="96"/>
    </location>
</feature>
<feature type="strand" evidence="4">
    <location>
        <begin position="4"/>
        <end position="7"/>
    </location>
</feature>
<feature type="helix" evidence="4">
    <location>
        <begin position="8"/>
        <end position="25"/>
    </location>
</feature>
<feature type="helix" evidence="4">
    <location>
        <begin position="27"/>
        <end position="46"/>
    </location>
</feature>
<feature type="helix" evidence="4">
    <location>
        <begin position="48"/>
        <end position="50"/>
    </location>
</feature>
<feature type="strand" evidence="4">
    <location>
        <begin position="51"/>
        <end position="53"/>
    </location>
</feature>
<feature type="turn" evidence="4">
    <location>
        <begin position="55"/>
        <end position="57"/>
    </location>
</feature>
<feature type="strand" evidence="4">
    <location>
        <begin position="61"/>
        <end position="67"/>
    </location>
</feature>
<feature type="strand" evidence="4">
    <location>
        <begin position="69"/>
        <end position="86"/>
    </location>
</feature>
<evidence type="ECO:0000269" key="1">
    <source>
    </source>
</evidence>
<evidence type="ECO:0000269" key="2">
    <source>
    </source>
</evidence>
<evidence type="ECO:0000305" key="3"/>
<evidence type="ECO:0007829" key="4">
    <source>
        <dbReference type="PDB" id="3KXE"/>
    </source>
</evidence>
<proteinExistence type="evidence at protein level"/>
<accession>Q9A9T8</accession>
<gene>
    <name type="primary">parE1</name>
    <name type="ordered locus">CC_0873</name>
</gene>
<name>PARE1_CAUVC</name>
<keyword id="KW-0002">3D-structure</keyword>
<keyword id="KW-1185">Reference proteome</keyword>
<keyword id="KW-1277">Toxin-antitoxin system</keyword>